<accession>Q0G9L5</accession>
<dbReference type="EC" id="7.1.1.-" evidence="1"/>
<dbReference type="EMBL" id="DQ899947">
    <property type="protein sequence ID" value="ABI32513.1"/>
    <property type="status" value="ALT_INIT"/>
    <property type="molecule type" value="Genomic_DNA"/>
</dbReference>
<dbReference type="RefSeq" id="YP_740206.2">
    <property type="nucleotide sequence ID" value="NC_008326.1"/>
</dbReference>
<dbReference type="SMR" id="Q0G9L5"/>
<dbReference type="GeneID" id="4266626"/>
<dbReference type="GO" id="GO:0009535">
    <property type="term" value="C:chloroplast thylakoid membrane"/>
    <property type="evidence" value="ECO:0007669"/>
    <property type="project" value="UniProtKB-SubCell"/>
</dbReference>
<dbReference type="GO" id="GO:0045271">
    <property type="term" value="C:respiratory chain complex I"/>
    <property type="evidence" value="ECO:0007669"/>
    <property type="project" value="TreeGrafter"/>
</dbReference>
<dbReference type="GO" id="GO:0051539">
    <property type="term" value="F:4 iron, 4 sulfur cluster binding"/>
    <property type="evidence" value="ECO:0007669"/>
    <property type="project" value="UniProtKB-KW"/>
</dbReference>
<dbReference type="GO" id="GO:0005506">
    <property type="term" value="F:iron ion binding"/>
    <property type="evidence" value="ECO:0007669"/>
    <property type="project" value="UniProtKB-UniRule"/>
</dbReference>
<dbReference type="GO" id="GO:0008137">
    <property type="term" value="F:NADH dehydrogenase (ubiquinone) activity"/>
    <property type="evidence" value="ECO:0007669"/>
    <property type="project" value="InterPro"/>
</dbReference>
<dbReference type="GO" id="GO:0048038">
    <property type="term" value="F:quinone binding"/>
    <property type="evidence" value="ECO:0007669"/>
    <property type="project" value="UniProtKB-KW"/>
</dbReference>
<dbReference type="GO" id="GO:0009060">
    <property type="term" value="P:aerobic respiration"/>
    <property type="evidence" value="ECO:0007669"/>
    <property type="project" value="TreeGrafter"/>
</dbReference>
<dbReference type="GO" id="GO:0015990">
    <property type="term" value="P:electron transport coupled proton transport"/>
    <property type="evidence" value="ECO:0007669"/>
    <property type="project" value="TreeGrafter"/>
</dbReference>
<dbReference type="GO" id="GO:0019684">
    <property type="term" value="P:photosynthesis, light reaction"/>
    <property type="evidence" value="ECO:0007669"/>
    <property type="project" value="UniProtKB-UniRule"/>
</dbReference>
<dbReference type="FunFam" id="3.40.50.12280:FF:000003">
    <property type="entry name" value="NAD(P)H-quinone oxidoreductase subunit K, chloroplastic"/>
    <property type="match status" value="1"/>
</dbReference>
<dbReference type="Gene3D" id="3.40.50.12280">
    <property type="match status" value="1"/>
</dbReference>
<dbReference type="HAMAP" id="MF_01356">
    <property type="entry name" value="NDH1_NuoB"/>
    <property type="match status" value="1"/>
</dbReference>
<dbReference type="InterPro" id="IPR006137">
    <property type="entry name" value="NADH_UbQ_OxRdtase-like_20kDa"/>
</dbReference>
<dbReference type="InterPro" id="IPR006138">
    <property type="entry name" value="NADH_UQ_OxRdtase_20Kd_su"/>
</dbReference>
<dbReference type="NCBIfam" id="TIGR01957">
    <property type="entry name" value="nuoB_fam"/>
    <property type="match status" value="1"/>
</dbReference>
<dbReference type="NCBIfam" id="NF005012">
    <property type="entry name" value="PRK06411.1"/>
    <property type="match status" value="1"/>
</dbReference>
<dbReference type="PANTHER" id="PTHR11995">
    <property type="entry name" value="NADH DEHYDROGENASE"/>
    <property type="match status" value="1"/>
</dbReference>
<dbReference type="PANTHER" id="PTHR11995:SF14">
    <property type="entry name" value="NADH DEHYDROGENASE [UBIQUINONE] IRON-SULFUR PROTEIN 7, MITOCHONDRIAL"/>
    <property type="match status" value="1"/>
</dbReference>
<dbReference type="Pfam" id="PF01058">
    <property type="entry name" value="Oxidored_q6"/>
    <property type="match status" value="1"/>
</dbReference>
<dbReference type="SUPFAM" id="SSF56770">
    <property type="entry name" value="HydA/Nqo6-like"/>
    <property type="match status" value="1"/>
</dbReference>
<dbReference type="PROSITE" id="PS01150">
    <property type="entry name" value="COMPLEX1_20K"/>
    <property type="match status" value="1"/>
</dbReference>
<name>NDHK_LIRTU</name>
<sequence length="225" mass="25105">MNSIEFPLLDRTTQNSVISTTSNDLSNWSRLSSLWPLLYGTSCCFIEFASLIGSRFDFDRYGLVPRSSPRQADLILTAGTVTMKMAPSLVRLYEQMPEPKYVIAMGACTITGGMFSTDSYSTVRGVDKLIPVDVYLPGCPPKPEAVIDAITKLRKKVSREISEDRIGSQQENRCFTTNHKFHVGRSTHTGNYDQGLLYQSPSTSEISSETFFKYKSSVSSHELVN</sequence>
<reference key="1">
    <citation type="journal article" date="2006" name="BMC Evol. Biol.">
        <title>Complete plastid genome sequences of Drimys, Liriodendron, and Piper: implications for the phylogenetic relationships of magnoliids.</title>
        <authorList>
            <person name="Cai Z."/>
            <person name="Penaflor C."/>
            <person name="Kuehl J.V."/>
            <person name="Leebens-Mack J."/>
            <person name="Carlson J.E."/>
            <person name="dePamphilis C.W."/>
            <person name="Boore J.L."/>
            <person name="Jansen R.K."/>
        </authorList>
    </citation>
    <scope>NUCLEOTIDE SEQUENCE [LARGE SCALE GENOMIC DNA]</scope>
</reference>
<gene>
    <name evidence="1" type="primary">ndhK</name>
</gene>
<protein>
    <recommendedName>
        <fullName evidence="1">NAD(P)H-quinone oxidoreductase subunit K, chloroplastic</fullName>
        <ecNumber evidence="1">7.1.1.-</ecNumber>
    </recommendedName>
    <alternativeName>
        <fullName evidence="1">NAD(P)H dehydrogenase subunit K</fullName>
    </alternativeName>
    <alternativeName>
        <fullName evidence="1">NADH-plastoquinone oxidoreductase subunit K</fullName>
    </alternativeName>
</protein>
<evidence type="ECO:0000255" key="1">
    <source>
        <dbReference type="HAMAP-Rule" id="MF_01356"/>
    </source>
</evidence>
<evidence type="ECO:0000305" key="2"/>
<proteinExistence type="inferred from homology"/>
<comment type="function">
    <text evidence="1">NDH shuttles electrons from NAD(P)H:plastoquinone, via FMN and iron-sulfur (Fe-S) centers, to quinones in the photosynthetic chain and possibly in a chloroplast respiratory chain. The immediate electron acceptor for the enzyme in this species is believed to be plastoquinone. Couples the redox reaction to proton translocation, and thus conserves the redox energy in a proton gradient.</text>
</comment>
<comment type="catalytic activity">
    <reaction evidence="1">
        <text>a plastoquinone + NADH + (n+1) H(+)(in) = a plastoquinol + NAD(+) + n H(+)(out)</text>
        <dbReference type="Rhea" id="RHEA:42608"/>
        <dbReference type="Rhea" id="RHEA-COMP:9561"/>
        <dbReference type="Rhea" id="RHEA-COMP:9562"/>
        <dbReference type="ChEBI" id="CHEBI:15378"/>
        <dbReference type="ChEBI" id="CHEBI:17757"/>
        <dbReference type="ChEBI" id="CHEBI:57540"/>
        <dbReference type="ChEBI" id="CHEBI:57945"/>
        <dbReference type="ChEBI" id="CHEBI:62192"/>
    </reaction>
</comment>
<comment type="catalytic activity">
    <reaction evidence="1">
        <text>a plastoquinone + NADPH + (n+1) H(+)(in) = a plastoquinol + NADP(+) + n H(+)(out)</text>
        <dbReference type="Rhea" id="RHEA:42612"/>
        <dbReference type="Rhea" id="RHEA-COMP:9561"/>
        <dbReference type="Rhea" id="RHEA-COMP:9562"/>
        <dbReference type="ChEBI" id="CHEBI:15378"/>
        <dbReference type="ChEBI" id="CHEBI:17757"/>
        <dbReference type="ChEBI" id="CHEBI:57783"/>
        <dbReference type="ChEBI" id="CHEBI:58349"/>
        <dbReference type="ChEBI" id="CHEBI:62192"/>
    </reaction>
</comment>
<comment type="cofactor">
    <cofactor evidence="1">
        <name>[4Fe-4S] cluster</name>
        <dbReference type="ChEBI" id="CHEBI:49883"/>
    </cofactor>
    <text evidence="1">Binds 1 [4Fe-4S] cluster.</text>
</comment>
<comment type="subunit">
    <text evidence="1">NDH is composed of at least 16 different subunits, 5 of which are encoded in the nucleus.</text>
</comment>
<comment type="subcellular location">
    <subcellularLocation>
        <location evidence="1">Plastid</location>
        <location evidence="1">Chloroplast thylakoid membrane</location>
        <topology evidence="1">Peripheral membrane protein</topology>
        <orientation evidence="1">Stromal side</orientation>
    </subcellularLocation>
</comment>
<comment type="similarity">
    <text evidence="1">Belongs to the complex I 20 kDa subunit family.</text>
</comment>
<comment type="sequence caution" evidence="2">
    <conflict type="erroneous initiation">
        <sequence resource="EMBL-CDS" id="ABI32513"/>
    </conflict>
</comment>
<geneLocation type="chloroplast"/>
<feature type="chain" id="PRO_0000358556" description="NAD(P)H-quinone oxidoreductase subunit K, chloroplastic">
    <location>
        <begin position="1"/>
        <end position="225"/>
    </location>
</feature>
<feature type="binding site" evidence="1">
    <location>
        <position position="43"/>
    </location>
    <ligand>
        <name>[4Fe-4S] cluster</name>
        <dbReference type="ChEBI" id="CHEBI:49883"/>
    </ligand>
</feature>
<feature type="binding site" evidence="1">
    <location>
        <position position="44"/>
    </location>
    <ligand>
        <name>[4Fe-4S] cluster</name>
        <dbReference type="ChEBI" id="CHEBI:49883"/>
    </ligand>
</feature>
<feature type="binding site" evidence="1">
    <location>
        <position position="108"/>
    </location>
    <ligand>
        <name>[4Fe-4S] cluster</name>
        <dbReference type="ChEBI" id="CHEBI:49883"/>
    </ligand>
</feature>
<feature type="binding site" evidence="1">
    <location>
        <position position="139"/>
    </location>
    <ligand>
        <name>[4Fe-4S] cluster</name>
        <dbReference type="ChEBI" id="CHEBI:49883"/>
    </ligand>
</feature>
<keyword id="KW-0004">4Fe-4S</keyword>
<keyword id="KW-0150">Chloroplast</keyword>
<keyword id="KW-0408">Iron</keyword>
<keyword id="KW-0411">Iron-sulfur</keyword>
<keyword id="KW-0472">Membrane</keyword>
<keyword id="KW-0479">Metal-binding</keyword>
<keyword id="KW-0520">NAD</keyword>
<keyword id="KW-0521">NADP</keyword>
<keyword id="KW-0934">Plastid</keyword>
<keyword id="KW-0618">Plastoquinone</keyword>
<keyword id="KW-0874">Quinone</keyword>
<keyword id="KW-0793">Thylakoid</keyword>
<keyword id="KW-1278">Translocase</keyword>
<keyword id="KW-0813">Transport</keyword>
<organism>
    <name type="scientific">Liriodendron tulipifera</name>
    <name type="common">Tuliptree</name>
    <name type="synonym">Tulip poplar</name>
    <dbReference type="NCBI Taxonomy" id="3415"/>
    <lineage>
        <taxon>Eukaryota</taxon>
        <taxon>Viridiplantae</taxon>
        <taxon>Streptophyta</taxon>
        <taxon>Embryophyta</taxon>
        <taxon>Tracheophyta</taxon>
        <taxon>Spermatophyta</taxon>
        <taxon>Magnoliopsida</taxon>
        <taxon>Magnoliidae</taxon>
        <taxon>Magnoliales</taxon>
        <taxon>Magnoliaceae</taxon>
        <taxon>Liriodendron</taxon>
    </lineage>
</organism>